<comment type="function">
    <text evidence="1">Catalyzes the ATP-dependent 2-thiolation of cytidine in position 32 of tRNA, to form 2-thiocytidine (s(2)C32). The sulfur atoms are provided by the cysteine/cysteine desulfurase (IscS) system.</text>
</comment>
<comment type="catalytic activity">
    <reaction evidence="1">
        <text>cytidine(32) in tRNA + S-sulfanyl-L-cysteinyl-[cysteine desulfurase] + AH2 + ATP = 2-thiocytidine(32) in tRNA + L-cysteinyl-[cysteine desulfurase] + A + AMP + diphosphate + H(+)</text>
        <dbReference type="Rhea" id="RHEA:57048"/>
        <dbReference type="Rhea" id="RHEA-COMP:10288"/>
        <dbReference type="Rhea" id="RHEA-COMP:12157"/>
        <dbReference type="Rhea" id="RHEA-COMP:12158"/>
        <dbReference type="Rhea" id="RHEA-COMP:14821"/>
        <dbReference type="ChEBI" id="CHEBI:13193"/>
        <dbReference type="ChEBI" id="CHEBI:15378"/>
        <dbReference type="ChEBI" id="CHEBI:17499"/>
        <dbReference type="ChEBI" id="CHEBI:29950"/>
        <dbReference type="ChEBI" id="CHEBI:30616"/>
        <dbReference type="ChEBI" id="CHEBI:33019"/>
        <dbReference type="ChEBI" id="CHEBI:61963"/>
        <dbReference type="ChEBI" id="CHEBI:82748"/>
        <dbReference type="ChEBI" id="CHEBI:141453"/>
        <dbReference type="ChEBI" id="CHEBI:456215"/>
    </reaction>
    <physiologicalReaction direction="left-to-right" evidence="1">
        <dbReference type="Rhea" id="RHEA:57049"/>
    </physiologicalReaction>
</comment>
<comment type="cofactor">
    <cofactor evidence="1">
        <name>Mg(2+)</name>
        <dbReference type="ChEBI" id="CHEBI:18420"/>
    </cofactor>
</comment>
<comment type="cofactor">
    <cofactor evidence="1">
        <name>[4Fe-4S] cluster</name>
        <dbReference type="ChEBI" id="CHEBI:49883"/>
    </cofactor>
    <text evidence="1">Binds 1 [4Fe-4S] cluster per subunit. The cluster is chelated by three Cys residues, the fourth Fe has a free coordination site that may bind a sulfur atom transferred from the persulfide of IscS.</text>
</comment>
<comment type="pathway">
    <text evidence="1">tRNA modification.</text>
</comment>
<comment type="subunit">
    <text evidence="1">Homodimer.</text>
</comment>
<comment type="subcellular location">
    <subcellularLocation>
        <location evidence="1">Cytoplasm</location>
    </subcellularLocation>
</comment>
<comment type="miscellaneous">
    <text evidence="1">The thiolation reaction likely consists of two steps: a first activation step by ATP to form an adenylated intermediate of the target base of tRNA, and a second nucleophilic substitution step of the sulfur (S) atom supplied by the hydrosulfide attached to the Fe-S cluster.</text>
</comment>
<comment type="similarity">
    <text evidence="1">Belongs to the TtcA family.</text>
</comment>
<comment type="sequence caution" evidence="3">
    <conflict type="erroneous initiation">
        <sequence resource="EMBL-CDS" id="CAJ26059"/>
    </conflict>
    <text>Extended N-terminus.</text>
</comment>
<proteinExistence type="inferred from homology"/>
<name>TTCA_XANE5</name>
<accession>Q3BMF4</accession>
<keyword id="KW-0004">4Fe-4S</keyword>
<keyword id="KW-0067">ATP-binding</keyword>
<keyword id="KW-0963">Cytoplasm</keyword>
<keyword id="KW-0408">Iron</keyword>
<keyword id="KW-0411">Iron-sulfur</keyword>
<keyword id="KW-0460">Magnesium</keyword>
<keyword id="KW-0479">Metal-binding</keyword>
<keyword id="KW-0547">Nucleotide-binding</keyword>
<keyword id="KW-0694">RNA-binding</keyword>
<keyword id="KW-0808">Transferase</keyword>
<keyword id="KW-0819">tRNA processing</keyword>
<keyword id="KW-0820">tRNA-binding</keyword>
<organism>
    <name type="scientific">Xanthomonas euvesicatoria pv. vesicatoria (strain 85-10)</name>
    <name type="common">Xanthomonas campestris pv. vesicatoria</name>
    <dbReference type="NCBI Taxonomy" id="316273"/>
    <lineage>
        <taxon>Bacteria</taxon>
        <taxon>Pseudomonadati</taxon>
        <taxon>Pseudomonadota</taxon>
        <taxon>Gammaproteobacteria</taxon>
        <taxon>Lysobacterales</taxon>
        <taxon>Lysobacteraceae</taxon>
        <taxon>Xanthomonas</taxon>
    </lineage>
</organism>
<evidence type="ECO:0000255" key="1">
    <source>
        <dbReference type="HAMAP-Rule" id="MF_01850"/>
    </source>
</evidence>
<evidence type="ECO:0000256" key="2">
    <source>
        <dbReference type="SAM" id="MobiDB-lite"/>
    </source>
</evidence>
<evidence type="ECO:0000305" key="3"/>
<sequence>MTAVLPLPQPLADPAPRDPRQRLQREQLRLGKRLQRQVGQAIADFGMIAPGDKVMVCLSGGKDSYTLLDMLLQLQRKAPVPFSLVAVNLDQKQPDFPAHVLPAYLRGLGVPFDIVEQDTYSVVSRVIPAGKTMCSLCSRLRRGALYAYAQTHGVTKIALGHHRDDIVATFFMNLFHHARLAAMAPKLRSDDGAHVVIRPLAYVREADIAAYAQARQFPIIPCNLCGSQENLQRQQVGKLLQQWDREFPGRVEQIARALGDVRPEQLADRTLFDFLALGRSGDAPSDVDPDPSAWLSASHAPHDSD</sequence>
<feature type="chain" id="PRO_0000348872" description="tRNA-cytidine(32) 2-sulfurtransferase">
    <location>
        <begin position="1"/>
        <end position="305"/>
    </location>
</feature>
<feature type="region of interest" description="Disordered" evidence="2">
    <location>
        <begin position="1"/>
        <end position="20"/>
    </location>
</feature>
<feature type="region of interest" description="Disordered" evidence="2">
    <location>
        <begin position="282"/>
        <end position="305"/>
    </location>
</feature>
<feature type="short sequence motif" description="PP-loop motif" evidence="1">
    <location>
        <begin position="59"/>
        <end position="64"/>
    </location>
</feature>
<feature type="compositionally biased region" description="Low complexity" evidence="2">
    <location>
        <begin position="282"/>
        <end position="293"/>
    </location>
</feature>
<feature type="binding site" evidence="1">
    <location>
        <position position="134"/>
    </location>
    <ligand>
        <name>[4Fe-4S] cluster</name>
        <dbReference type="ChEBI" id="CHEBI:49883"/>
    </ligand>
</feature>
<feature type="binding site" evidence="1">
    <location>
        <position position="137"/>
    </location>
    <ligand>
        <name>[4Fe-4S] cluster</name>
        <dbReference type="ChEBI" id="CHEBI:49883"/>
    </ligand>
</feature>
<feature type="binding site" evidence="1">
    <location>
        <position position="225"/>
    </location>
    <ligand>
        <name>[4Fe-4S] cluster</name>
        <dbReference type="ChEBI" id="CHEBI:49883"/>
    </ligand>
</feature>
<reference key="1">
    <citation type="journal article" date="2005" name="J. Bacteriol.">
        <title>Insights into genome plasticity and pathogenicity of the plant pathogenic Bacterium Xanthomonas campestris pv. vesicatoria revealed by the complete genome sequence.</title>
        <authorList>
            <person name="Thieme F."/>
            <person name="Koebnik R."/>
            <person name="Bekel T."/>
            <person name="Berger C."/>
            <person name="Boch J."/>
            <person name="Buettner D."/>
            <person name="Caldana C."/>
            <person name="Gaigalat L."/>
            <person name="Goesmann A."/>
            <person name="Kay S."/>
            <person name="Kirchner O."/>
            <person name="Lanz C."/>
            <person name="Linke B."/>
            <person name="McHardy A.C."/>
            <person name="Meyer F."/>
            <person name="Mittenhuber G."/>
            <person name="Nies D.H."/>
            <person name="Niesbach-Kloesgen U."/>
            <person name="Patschkowski T."/>
            <person name="Rueckert C."/>
            <person name="Rupp O."/>
            <person name="Schneiker S."/>
            <person name="Schuster S.C."/>
            <person name="Vorhoelter F.J."/>
            <person name="Weber E."/>
            <person name="Puehler A."/>
            <person name="Bonas U."/>
            <person name="Bartels D."/>
            <person name="Kaiser O."/>
        </authorList>
    </citation>
    <scope>NUCLEOTIDE SEQUENCE [LARGE SCALE GENOMIC DNA]</scope>
    <source>
        <strain>85-10</strain>
    </source>
</reference>
<protein>
    <recommendedName>
        <fullName evidence="1">tRNA-cytidine(32) 2-sulfurtransferase</fullName>
        <ecNumber evidence="1">2.8.1.-</ecNumber>
    </recommendedName>
    <alternativeName>
        <fullName evidence="1">Two-thiocytidine biosynthesis protein A</fullName>
    </alternativeName>
    <alternativeName>
        <fullName evidence="1">tRNA 2-thiocytidine biosynthesis protein TtcA</fullName>
    </alternativeName>
</protein>
<gene>
    <name evidence="1" type="primary">ttcA</name>
    <name type="ordered locus">XCV4328</name>
</gene>
<dbReference type="EC" id="2.8.1.-" evidence="1"/>
<dbReference type="EMBL" id="AM039952">
    <property type="protein sequence ID" value="CAJ26059.1"/>
    <property type="status" value="ALT_INIT"/>
    <property type="molecule type" value="Genomic_DNA"/>
</dbReference>
<dbReference type="RefSeq" id="WP_014091470.1">
    <property type="nucleotide sequence ID" value="NZ_CP017190.1"/>
</dbReference>
<dbReference type="SMR" id="Q3BMF4"/>
<dbReference type="STRING" id="456327.BJD11_23760"/>
<dbReference type="GeneID" id="97512366"/>
<dbReference type="KEGG" id="xcv:XCV4328"/>
<dbReference type="eggNOG" id="COG0037">
    <property type="taxonomic scope" value="Bacteria"/>
</dbReference>
<dbReference type="HOGENOM" id="CLU_026481_0_1_6"/>
<dbReference type="Proteomes" id="UP000007069">
    <property type="component" value="Chromosome"/>
</dbReference>
<dbReference type="GO" id="GO:0005737">
    <property type="term" value="C:cytoplasm"/>
    <property type="evidence" value="ECO:0007669"/>
    <property type="project" value="UniProtKB-SubCell"/>
</dbReference>
<dbReference type="GO" id="GO:0051539">
    <property type="term" value="F:4 iron, 4 sulfur cluster binding"/>
    <property type="evidence" value="ECO:0007669"/>
    <property type="project" value="UniProtKB-UniRule"/>
</dbReference>
<dbReference type="GO" id="GO:0005524">
    <property type="term" value="F:ATP binding"/>
    <property type="evidence" value="ECO:0007669"/>
    <property type="project" value="UniProtKB-UniRule"/>
</dbReference>
<dbReference type="GO" id="GO:0000287">
    <property type="term" value="F:magnesium ion binding"/>
    <property type="evidence" value="ECO:0007669"/>
    <property type="project" value="UniProtKB-UniRule"/>
</dbReference>
<dbReference type="GO" id="GO:0016783">
    <property type="term" value="F:sulfurtransferase activity"/>
    <property type="evidence" value="ECO:0007669"/>
    <property type="project" value="UniProtKB-UniRule"/>
</dbReference>
<dbReference type="GO" id="GO:0000049">
    <property type="term" value="F:tRNA binding"/>
    <property type="evidence" value="ECO:0007669"/>
    <property type="project" value="UniProtKB-KW"/>
</dbReference>
<dbReference type="GO" id="GO:0034227">
    <property type="term" value="P:tRNA thio-modification"/>
    <property type="evidence" value="ECO:0007669"/>
    <property type="project" value="UniProtKB-UniRule"/>
</dbReference>
<dbReference type="CDD" id="cd24138">
    <property type="entry name" value="TtcA-like"/>
    <property type="match status" value="1"/>
</dbReference>
<dbReference type="Gene3D" id="3.40.50.620">
    <property type="entry name" value="HUPs"/>
    <property type="match status" value="1"/>
</dbReference>
<dbReference type="HAMAP" id="MF_01850">
    <property type="entry name" value="TtcA"/>
    <property type="match status" value="1"/>
</dbReference>
<dbReference type="InterPro" id="IPR014729">
    <property type="entry name" value="Rossmann-like_a/b/a_fold"/>
</dbReference>
<dbReference type="InterPro" id="IPR011063">
    <property type="entry name" value="TilS/TtcA_N"/>
</dbReference>
<dbReference type="InterPro" id="IPR012089">
    <property type="entry name" value="tRNA_Cyd_32_2_STrfase"/>
</dbReference>
<dbReference type="InterPro" id="IPR035107">
    <property type="entry name" value="tRNA_thiolation_TtcA_Ctu1"/>
</dbReference>
<dbReference type="NCBIfam" id="NF007972">
    <property type="entry name" value="PRK10696.1"/>
    <property type="match status" value="1"/>
</dbReference>
<dbReference type="PANTHER" id="PTHR43686:SF1">
    <property type="entry name" value="AMINOTRAN_5 DOMAIN-CONTAINING PROTEIN"/>
    <property type="match status" value="1"/>
</dbReference>
<dbReference type="PANTHER" id="PTHR43686">
    <property type="entry name" value="SULFURTRANSFERASE-RELATED"/>
    <property type="match status" value="1"/>
</dbReference>
<dbReference type="Pfam" id="PF01171">
    <property type="entry name" value="ATP_bind_3"/>
    <property type="match status" value="1"/>
</dbReference>
<dbReference type="PIRSF" id="PIRSF004976">
    <property type="entry name" value="ATPase_YdaO"/>
    <property type="match status" value="1"/>
</dbReference>
<dbReference type="SUPFAM" id="SSF52402">
    <property type="entry name" value="Adenine nucleotide alpha hydrolases-like"/>
    <property type="match status" value="1"/>
</dbReference>